<proteinExistence type="inferred from homology"/>
<accession>A7ZMI0</accession>
<name>IHFA_ECO24</name>
<keyword id="KW-0233">DNA recombination</keyword>
<keyword id="KW-0238">DNA-binding</keyword>
<keyword id="KW-1185">Reference proteome</keyword>
<keyword id="KW-0804">Transcription</keyword>
<keyword id="KW-0805">Transcription regulation</keyword>
<keyword id="KW-0810">Translation regulation</keyword>
<comment type="function">
    <text evidence="1">This protein is one of the two subunits of integration host factor, a specific DNA-binding protein that functions in genetic recombination as well as in transcriptional and translational control.</text>
</comment>
<comment type="subunit">
    <text evidence="1">Heterodimer of an alpha and a beta chain.</text>
</comment>
<comment type="similarity">
    <text evidence="1">Belongs to the bacterial histone-like protein family.</text>
</comment>
<feature type="chain" id="PRO_1000060540" description="Integration host factor subunit alpha">
    <location>
        <begin position="1"/>
        <end position="99"/>
    </location>
</feature>
<feature type="region of interest" description="Disordered" evidence="2">
    <location>
        <begin position="49"/>
        <end position="73"/>
    </location>
</feature>
<reference key="1">
    <citation type="journal article" date="2008" name="J. Bacteriol.">
        <title>The pangenome structure of Escherichia coli: comparative genomic analysis of E. coli commensal and pathogenic isolates.</title>
        <authorList>
            <person name="Rasko D.A."/>
            <person name="Rosovitz M.J."/>
            <person name="Myers G.S.A."/>
            <person name="Mongodin E.F."/>
            <person name="Fricke W.F."/>
            <person name="Gajer P."/>
            <person name="Crabtree J."/>
            <person name="Sebaihia M."/>
            <person name="Thomson N.R."/>
            <person name="Chaudhuri R."/>
            <person name="Henderson I.R."/>
            <person name="Sperandio V."/>
            <person name="Ravel J."/>
        </authorList>
    </citation>
    <scope>NUCLEOTIDE SEQUENCE [LARGE SCALE GENOMIC DNA]</scope>
    <source>
        <strain>E24377A / ETEC</strain>
    </source>
</reference>
<gene>
    <name evidence="1" type="primary">ihfA</name>
    <name evidence="1" type="synonym">himA</name>
    <name type="ordered locus">EcE24377A_1931</name>
</gene>
<organism>
    <name type="scientific">Escherichia coli O139:H28 (strain E24377A / ETEC)</name>
    <dbReference type="NCBI Taxonomy" id="331111"/>
    <lineage>
        <taxon>Bacteria</taxon>
        <taxon>Pseudomonadati</taxon>
        <taxon>Pseudomonadota</taxon>
        <taxon>Gammaproteobacteria</taxon>
        <taxon>Enterobacterales</taxon>
        <taxon>Enterobacteriaceae</taxon>
        <taxon>Escherichia</taxon>
    </lineage>
</organism>
<sequence length="99" mass="11354">MALTKAEMSEYLFDKLGLSKRDAKELVELFFEEIRRALENGEQVKLSGFGNFDLRDKNQRPGRNPKTGEDIPITARRVVTFRPGQKLKSRVENASPKDE</sequence>
<dbReference type="EMBL" id="CP000800">
    <property type="protein sequence ID" value="ABV21011.1"/>
    <property type="molecule type" value="Genomic_DNA"/>
</dbReference>
<dbReference type="RefSeq" id="WP_001229265.1">
    <property type="nucleotide sequence ID" value="NC_009801.1"/>
</dbReference>
<dbReference type="SMR" id="A7ZMI0"/>
<dbReference type="GeneID" id="93775925"/>
<dbReference type="KEGG" id="ecw:EcE24377A_1931"/>
<dbReference type="HOGENOM" id="CLU_105066_1_3_6"/>
<dbReference type="Proteomes" id="UP000001122">
    <property type="component" value="Chromosome"/>
</dbReference>
<dbReference type="GO" id="GO:0005829">
    <property type="term" value="C:cytosol"/>
    <property type="evidence" value="ECO:0007669"/>
    <property type="project" value="TreeGrafter"/>
</dbReference>
<dbReference type="GO" id="GO:0003677">
    <property type="term" value="F:DNA binding"/>
    <property type="evidence" value="ECO:0007669"/>
    <property type="project" value="UniProtKB-UniRule"/>
</dbReference>
<dbReference type="GO" id="GO:0030527">
    <property type="term" value="F:structural constituent of chromatin"/>
    <property type="evidence" value="ECO:0007669"/>
    <property type="project" value="InterPro"/>
</dbReference>
<dbReference type="GO" id="GO:0006310">
    <property type="term" value="P:DNA recombination"/>
    <property type="evidence" value="ECO:0007669"/>
    <property type="project" value="UniProtKB-UniRule"/>
</dbReference>
<dbReference type="GO" id="GO:0009893">
    <property type="term" value="P:positive regulation of metabolic process"/>
    <property type="evidence" value="ECO:0007669"/>
    <property type="project" value="UniProtKB-ARBA"/>
</dbReference>
<dbReference type="GO" id="GO:0006355">
    <property type="term" value="P:regulation of DNA-templated transcription"/>
    <property type="evidence" value="ECO:0007669"/>
    <property type="project" value="UniProtKB-UniRule"/>
</dbReference>
<dbReference type="GO" id="GO:0006417">
    <property type="term" value="P:regulation of translation"/>
    <property type="evidence" value="ECO:0007669"/>
    <property type="project" value="UniProtKB-UniRule"/>
</dbReference>
<dbReference type="CDD" id="cd13835">
    <property type="entry name" value="IHF_A"/>
    <property type="match status" value="1"/>
</dbReference>
<dbReference type="FunFam" id="4.10.520.10:FF:000002">
    <property type="entry name" value="Integration host factor subunit alpha"/>
    <property type="match status" value="1"/>
</dbReference>
<dbReference type="Gene3D" id="4.10.520.10">
    <property type="entry name" value="IHF-like DNA-binding proteins"/>
    <property type="match status" value="1"/>
</dbReference>
<dbReference type="HAMAP" id="MF_00380">
    <property type="entry name" value="IHF_alpha"/>
    <property type="match status" value="1"/>
</dbReference>
<dbReference type="InterPro" id="IPR000119">
    <property type="entry name" value="Hist_DNA-bd"/>
</dbReference>
<dbReference type="InterPro" id="IPR020816">
    <property type="entry name" value="Histone-like_DNA-bd_CS"/>
</dbReference>
<dbReference type="InterPro" id="IPR010992">
    <property type="entry name" value="IHF-like_DNA-bd_dom_sf"/>
</dbReference>
<dbReference type="InterPro" id="IPR005684">
    <property type="entry name" value="IHF_alpha"/>
</dbReference>
<dbReference type="NCBIfam" id="TIGR00987">
    <property type="entry name" value="himA"/>
    <property type="match status" value="1"/>
</dbReference>
<dbReference type="NCBIfam" id="NF001401">
    <property type="entry name" value="PRK00285.1"/>
    <property type="match status" value="1"/>
</dbReference>
<dbReference type="PANTHER" id="PTHR33175">
    <property type="entry name" value="DNA-BINDING PROTEIN HU"/>
    <property type="match status" value="1"/>
</dbReference>
<dbReference type="PANTHER" id="PTHR33175:SF2">
    <property type="entry name" value="INTEGRATION HOST FACTOR SUBUNIT ALPHA"/>
    <property type="match status" value="1"/>
</dbReference>
<dbReference type="Pfam" id="PF00216">
    <property type="entry name" value="Bac_DNA_binding"/>
    <property type="match status" value="1"/>
</dbReference>
<dbReference type="PRINTS" id="PR01727">
    <property type="entry name" value="DNABINDINGHU"/>
</dbReference>
<dbReference type="SMART" id="SM00411">
    <property type="entry name" value="BHL"/>
    <property type="match status" value="1"/>
</dbReference>
<dbReference type="SUPFAM" id="SSF47729">
    <property type="entry name" value="IHF-like DNA-binding proteins"/>
    <property type="match status" value="1"/>
</dbReference>
<dbReference type="PROSITE" id="PS00045">
    <property type="entry name" value="HISTONE_LIKE"/>
    <property type="match status" value="1"/>
</dbReference>
<protein>
    <recommendedName>
        <fullName evidence="1">Integration host factor subunit alpha</fullName>
        <shortName evidence="1">IHF-alpha</shortName>
    </recommendedName>
</protein>
<evidence type="ECO:0000255" key="1">
    <source>
        <dbReference type="HAMAP-Rule" id="MF_00380"/>
    </source>
</evidence>
<evidence type="ECO:0000256" key="2">
    <source>
        <dbReference type="SAM" id="MobiDB-lite"/>
    </source>
</evidence>